<protein>
    <recommendedName>
        <fullName evidence="1">Anthranilate phosphoribosyltransferase</fullName>
        <ecNumber evidence="1">2.4.2.18</ecNumber>
    </recommendedName>
</protein>
<accession>Q2IWB1</accession>
<keyword id="KW-0028">Amino-acid biosynthesis</keyword>
<keyword id="KW-0057">Aromatic amino acid biosynthesis</keyword>
<keyword id="KW-0328">Glycosyltransferase</keyword>
<keyword id="KW-0460">Magnesium</keyword>
<keyword id="KW-0479">Metal-binding</keyword>
<keyword id="KW-1185">Reference proteome</keyword>
<keyword id="KW-0808">Transferase</keyword>
<keyword id="KW-0822">Tryptophan biosynthesis</keyword>
<name>TRPD_RHOP2</name>
<evidence type="ECO:0000255" key="1">
    <source>
        <dbReference type="HAMAP-Rule" id="MF_00211"/>
    </source>
</evidence>
<evidence type="ECO:0000305" key="2"/>
<proteinExistence type="inferred from homology"/>
<gene>
    <name evidence="1" type="primary">trpD</name>
    <name type="ordered locus">RPB_2797</name>
</gene>
<sequence>MIDFKAVIAKVATGASLTRDEAANAFDAMMSGDATPSQMGALLMGLRVRGETVDEITGAVTTMRAKMLTVAAPPDAVDVVGTGGDGSGSVNVSTCTSFVVAGCGVPVAKHGNRALSSKSGAADVLNALGVKIDITPDHVGRCVAEAGIGFMFAPTHHPAMKNVGPTRVELATRTIFNLLGPLSNPAGVKRQMIGVFSRQWVQPLAQVLQNLGSESIWVVHGSDGLDEITLSGPTAVAELKNGEIRTFEIGPEDAGLPRAPADALKGGDAEANAVALRAVLEGMPGPYRDVALLNAAATLIVAGKAKDLKEGVALGAQSIDSGAAEARLKKLIAVSAAA</sequence>
<feature type="chain" id="PRO_0000325456" description="Anthranilate phosphoribosyltransferase">
    <location>
        <begin position="1"/>
        <end position="338"/>
    </location>
</feature>
<feature type="binding site" evidence="1">
    <location>
        <position position="81"/>
    </location>
    <ligand>
        <name>5-phospho-alpha-D-ribose 1-diphosphate</name>
        <dbReference type="ChEBI" id="CHEBI:58017"/>
    </ligand>
</feature>
<feature type="binding site" evidence="1">
    <location>
        <position position="81"/>
    </location>
    <ligand>
        <name>anthranilate</name>
        <dbReference type="ChEBI" id="CHEBI:16567"/>
        <label>1</label>
    </ligand>
</feature>
<feature type="binding site" evidence="1">
    <location>
        <begin position="84"/>
        <end position="85"/>
    </location>
    <ligand>
        <name>5-phospho-alpha-D-ribose 1-diphosphate</name>
        <dbReference type="ChEBI" id="CHEBI:58017"/>
    </ligand>
</feature>
<feature type="binding site" evidence="1">
    <location>
        <position position="89"/>
    </location>
    <ligand>
        <name>5-phospho-alpha-D-ribose 1-diphosphate</name>
        <dbReference type="ChEBI" id="CHEBI:58017"/>
    </ligand>
</feature>
<feature type="binding site" evidence="1">
    <location>
        <begin position="91"/>
        <end position="94"/>
    </location>
    <ligand>
        <name>5-phospho-alpha-D-ribose 1-diphosphate</name>
        <dbReference type="ChEBI" id="CHEBI:58017"/>
    </ligand>
</feature>
<feature type="binding site" evidence="1">
    <location>
        <position position="93"/>
    </location>
    <ligand>
        <name>Mg(2+)</name>
        <dbReference type="ChEBI" id="CHEBI:18420"/>
        <label>1</label>
    </ligand>
</feature>
<feature type="binding site" evidence="1">
    <location>
        <begin position="109"/>
        <end position="117"/>
    </location>
    <ligand>
        <name>5-phospho-alpha-D-ribose 1-diphosphate</name>
        <dbReference type="ChEBI" id="CHEBI:58017"/>
    </ligand>
</feature>
<feature type="binding site" evidence="1">
    <location>
        <position position="112"/>
    </location>
    <ligand>
        <name>anthranilate</name>
        <dbReference type="ChEBI" id="CHEBI:16567"/>
        <label>1</label>
    </ligand>
</feature>
<feature type="binding site" evidence="1">
    <location>
        <position position="121"/>
    </location>
    <ligand>
        <name>5-phospho-alpha-D-ribose 1-diphosphate</name>
        <dbReference type="ChEBI" id="CHEBI:58017"/>
    </ligand>
</feature>
<feature type="binding site" evidence="1">
    <location>
        <position position="167"/>
    </location>
    <ligand>
        <name>anthranilate</name>
        <dbReference type="ChEBI" id="CHEBI:16567"/>
        <label>2</label>
    </ligand>
</feature>
<feature type="binding site" evidence="1">
    <location>
        <position position="226"/>
    </location>
    <ligand>
        <name>Mg(2+)</name>
        <dbReference type="ChEBI" id="CHEBI:18420"/>
        <label>2</label>
    </ligand>
</feature>
<feature type="binding site" evidence="1">
    <location>
        <position position="227"/>
    </location>
    <ligand>
        <name>Mg(2+)</name>
        <dbReference type="ChEBI" id="CHEBI:18420"/>
        <label>1</label>
    </ligand>
</feature>
<feature type="binding site" evidence="1">
    <location>
        <position position="227"/>
    </location>
    <ligand>
        <name>Mg(2+)</name>
        <dbReference type="ChEBI" id="CHEBI:18420"/>
        <label>2</label>
    </ligand>
</feature>
<reference key="1">
    <citation type="submission" date="2006-01" db="EMBL/GenBank/DDBJ databases">
        <title>Complete sequence of Rhodopseudomonas palustris HaA2.</title>
        <authorList>
            <consortium name="US DOE Joint Genome Institute"/>
            <person name="Copeland A."/>
            <person name="Lucas S."/>
            <person name="Lapidus A."/>
            <person name="Barry K."/>
            <person name="Detter J.C."/>
            <person name="Glavina T."/>
            <person name="Hammon N."/>
            <person name="Israni S."/>
            <person name="Pitluck S."/>
            <person name="Chain P."/>
            <person name="Malfatti S."/>
            <person name="Shin M."/>
            <person name="Vergez L."/>
            <person name="Schmutz J."/>
            <person name="Larimer F."/>
            <person name="Land M."/>
            <person name="Hauser L."/>
            <person name="Pelletier D.A."/>
            <person name="Kyrpides N."/>
            <person name="Anderson I."/>
            <person name="Oda Y."/>
            <person name="Harwood C.S."/>
            <person name="Richardson P."/>
        </authorList>
    </citation>
    <scope>NUCLEOTIDE SEQUENCE [LARGE SCALE GENOMIC DNA]</scope>
    <source>
        <strain>HaA2</strain>
    </source>
</reference>
<comment type="function">
    <text evidence="1">Catalyzes the transfer of the phosphoribosyl group of 5-phosphorylribose-1-pyrophosphate (PRPP) to anthranilate to yield N-(5'-phosphoribosyl)-anthranilate (PRA).</text>
</comment>
<comment type="catalytic activity">
    <reaction evidence="1">
        <text>N-(5-phospho-beta-D-ribosyl)anthranilate + diphosphate = 5-phospho-alpha-D-ribose 1-diphosphate + anthranilate</text>
        <dbReference type="Rhea" id="RHEA:11768"/>
        <dbReference type="ChEBI" id="CHEBI:16567"/>
        <dbReference type="ChEBI" id="CHEBI:18277"/>
        <dbReference type="ChEBI" id="CHEBI:33019"/>
        <dbReference type="ChEBI" id="CHEBI:58017"/>
        <dbReference type="EC" id="2.4.2.18"/>
    </reaction>
</comment>
<comment type="cofactor">
    <cofactor evidence="1">
        <name>Mg(2+)</name>
        <dbReference type="ChEBI" id="CHEBI:18420"/>
    </cofactor>
    <text evidence="1">Binds 2 magnesium ions per monomer.</text>
</comment>
<comment type="pathway">
    <text evidence="1">Amino-acid biosynthesis; L-tryptophan biosynthesis; L-tryptophan from chorismate: step 2/5.</text>
</comment>
<comment type="subunit">
    <text evidence="1">Homodimer.</text>
</comment>
<comment type="similarity">
    <text evidence="1">Belongs to the anthranilate phosphoribosyltransferase family.</text>
</comment>
<comment type="sequence caution" evidence="2">
    <conflict type="erroneous initiation">
        <sequence resource="EMBL-CDS" id="ABD07499"/>
    </conflict>
    <text>Extended N-terminus.</text>
</comment>
<organism>
    <name type="scientific">Rhodopseudomonas palustris (strain HaA2)</name>
    <dbReference type="NCBI Taxonomy" id="316058"/>
    <lineage>
        <taxon>Bacteria</taxon>
        <taxon>Pseudomonadati</taxon>
        <taxon>Pseudomonadota</taxon>
        <taxon>Alphaproteobacteria</taxon>
        <taxon>Hyphomicrobiales</taxon>
        <taxon>Nitrobacteraceae</taxon>
        <taxon>Rhodopseudomonas</taxon>
    </lineage>
</organism>
<dbReference type="EC" id="2.4.2.18" evidence="1"/>
<dbReference type="EMBL" id="CP000250">
    <property type="protein sequence ID" value="ABD07499.1"/>
    <property type="status" value="ALT_INIT"/>
    <property type="molecule type" value="Genomic_DNA"/>
</dbReference>
<dbReference type="RefSeq" id="WP_041798729.1">
    <property type="nucleotide sequence ID" value="NC_007778.1"/>
</dbReference>
<dbReference type="SMR" id="Q2IWB1"/>
<dbReference type="STRING" id="316058.RPB_2797"/>
<dbReference type="KEGG" id="rpb:RPB_2797"/>
<dbReference type="eggNOG" id="COG0547">
    <property type="taxonomic scope" value="Bacteria"/>
</dbReference>
<dbReference type="HOGENOM" id="CLU_034315_2_1_5"/>
<dbReference type="OrthoDB" id="9806430at2"/>
<dbReference type="UniPathway" id="UPA00035">
    <property type="reaction ID" value="UER00041"/>
</dbReference>
<dbReference type="Proteomes" id="UP000008809">
    <property type="component" value="Chromosome"/>
</dbReference>
<dbReference type="GO" id="GO:0005829">
    <property type="term" value="C:cytosol"/>
    <property type="evidence" value="ECO:0007669"/>
    <property type="project" value="TreeGrafter"/>
</dbReference>
<dbReference type="GO" id="GO:0004048">
    <property type="term" value="F:anthranilate phosphoribosyltransferase activity"/>
    <property type="evidence" value="ECO:0007669"/>
    <property type="project" value="UniProtKB-UniRule"/>
</dbReference>
<dbReference type="GO" id="GO:0000287">
    <property type="term" value="F:magnesium ion binding"/>
    <property type="evidence" value="ECO:0007669"/>
    <property type="project" value="UniProtKB-UniRule"/>
</dbReference>
<dbReference type="GO" id="GO:0000162">
    <property type="term" value="P:L-tryptophan biosynthetic process"/>
    <property type="evidence" value="ECO:0007669"/>
    <property type="project" value="UniProtKB-UniRule"/>
</dbReference>
<dbReference type="FunFam" id="3.40.1030.10:FF:000002">
    <property type="entry name" value="Anthranilate phosphoribosyltransferase"/>
    <property type="match status" value="1"/>
</dbReference>
<dbReference type="Gene3D" id="3.40.1030.10">
    <property type="entry name" value="Nucleoside phosphorylase/phosphoribosyltransferase catalytic domain"/>
    <property type="match status" value="1"/>
</dbReference>
<dbReference type="Gene3D" id="1.20.970.10">
    <property type="entry name" value="Transferase, Pyrimidine Nucleoside Phosphorylase, Chain C"/>
    <property type="match status" value="1"/>
</dbReference>
<dbReference type="HAMAP" id="MF_00211">
    <property type="entry name" value="TrpD"/>
    <property type="match status" value="1"/>
</dbReference>
<dbReference type="InterPro" id="IPR005940">
    <property type="entry name" value="Anthranilate_Pribosyl_Tfrase"/>
</dbReference>
<dbReference type="InterPro" id="IPR000312">
    <property type="entry name" value="Glycosyl_Trfase_fam3"/>
</dbReference>
<dbReference type="InterPro" id="IPR017459">
    <property type="entry name" value="Glycosyl_Trfase_fam3_N_dom"/>
</dbReference>
<dbReference type="InterPro" id="IPR036320">
    <property type="entry name" value="Glycosyl_Trfase_fam3_N_dom_sf"/>
</dbReference>
<dbReference type="InterPro" id="IPR035902">
    <property type="entry name" value="Nuc_phospho_transferase"/>
</dbReference>
<dbReference type="NCBIfam" id="TIGR01245">
    <property type="entry name" value="trpD"/>
    <property type="match status" value="1"/>
</dbReference>
<dbReference type="PANTHER" id="PTHR43285">
    <property type="entry name" value="ANTHRANILATE PHOSPHORIBOSYLTRANSFERASE"/>
    <property type="match status" value="1"/>
</dbReference>
<dbReference type="PANTHER" id="PTHR43285:SF2">
    <property type="entry name" value="ANTHRANILATE PHOSPHORIBOSYLTRANSFERASE"/>
    <property type="match status" value="1"/>
</dbReference>
<dbReference type="Pfam" id="PF02885">
    <property type="entry name" value="Glycos_trans_3N"/>
    <property type="match status" value="1"/>
</dbReference>
<dbReference type="Pfam" id="PF00591">
    <property type="entry name" value="Glycos_transf_3"/>
    <property type="match status" value="1"/>
</dbReference>
<dbReference type="SUPFAM" id="SSF52418">
    <property type="entry name" value="Nucleoside phosphorylase/phosphoribosyltransferase catalytic domain"/>
    <property type="match status" value="1"/>
</dbReference>
<dbReference type="SUPFAM" id="SSF47648">
    <property type="entry name" value="Nucleoside phosphorylase/phosphoribosyltransferase N-terminal domain"/>
    <property type="match status" value="1"/>
</dbReference>